<accession>A6BM34</accession>
<accession>B7ZIA9</accession>
<sequence length="39" mass="4456">MLTLKVFVYTVVIFFVSLFLFGFLSNDPGRNPGRKEESS</sequence>
<gene>
    <name evidence="1" type="primary">psbI</name>
</gene>
<geneLocation type="chloroplast"/>
<comment type="function">
    <text evidence="1">One of the components of the core complex of photosystem II (PSII), required for its stability and/or assembly. PSII is a light-driven water:plastoquinone oxidoreductase that uses light energy to abstract electrons from H(2)O, generating O(2) and a proton gradient subsequently used for ATP formation. It consists of a core antenna complex that captures photons, and an electron transfer chain that converts photonic excitation into a charge separation.</text>
</comment>
<comment type="subunit">
    <text evidence="1">PSII is composed of 1 copy each of membrane proteins PsbA, PsbB, PsbC, PsbD, PsbE, PsbF, PsbH, PsbI, PsbJ, PsbK, PsbL, PsbM, PsbT, PsbX, PsbY, PsbZ, Psb30/Ycf12, at least 3 peripheral proteins of the oxygen-evolving complex and a large number of cofactors. It forms dimeric complexes.</text>
</comment>
<comment type="subcellular location">
    <subcellularLocation>
        <location evidence="1">Plastid</location>
        <location evidence="1">Chloroplast thylakoid membrane</location>
        <topology evidence="1">Single-pass membrane protein</topology>
    </subcellularLocation>
</comment>
<comment type="similarity">
    <text evidence="1">Belongs to the PsbI family.</text>
</comment>
<name>PSBI_GNEPA</name>
<evidence type="ECO:0000255" key="1">
    <source>
        <dbReference type="HAMAP-Rule" id="MF_01316"/>
    </source>
</evidence>
<feature type="chain" id="PRO_0000353231" description="Photosystem II reaction center protein I">
    <location>
        <begin position="1"/>
        <end position="39"/>
    </location>
</feature>
<feature type="transmembrane region" description="Helical" evidence="1">
    <location>
        <begin position="4"/>
        <end position="24"/>
    </location>
</feature>
<dbReference type="EMBL" id="AB295930">
    <property type="protein sequence ID" value="BAF64879.1"/>
    <property type="molecule type" value="Genomic_DNA"/>
</dbReference>
<dbReference type="EMBL" id="AP009569">
    <property type="protein sequence ID" value="BAH11289.1"/>
    <property type="molecule type" value="Genomic_DNA"/>
</dbReference>
<dbReference type="RefSeq" id="YP_002519778.1">
    <property type="nucleotide sequence ID" value="NC_011942.1"/>
</dbReference>
<dbReference type="SMR" id="A6BM34"/>
<dbReference type="GeneID" id="7368115"/>
<dbReference type="GO" id="GO:0009535">
    <property type="term" value="C:chloroplast thylakoid membrane"/>
    <property type="evidence" value="ECO:0007669"/>
    <property type="project" value="UniProtKB-SubCell"/>
</dbReference>
<dbReference type="GO" id="GO:0009539">
    <property type="term" value="C:photosystem II reaction center"/>
    <property type="evidence" value="ECO:0007669"/>
    <property type="project" value="InterPro"/>
</dbReference>
<dbReference type="GO" id="GO:0015979">
    <property type="term" value="P:photosynthesis"/>
    <property type="evidence" value="ECO:0007669"/>
    <property type="project" value="UniProtKB-UniRule"/>
</dbReference>
<dbReference type="HAMAP" id="MF_01316">
    <property type="entry name" value="PSII_PsbI"/>
    <property type="match status" value="1"/>
</dbReference>
<dbReference type="InterPro" id="IPR003686">
    <property type="entry name" value="PSII_PsbI"/>
</dbReference>
<dbReference type="InterPro" id="IPR037271">
    <property type="entry name" value="PSII_PsbI_sf"/>
</dbReference>
<dbReference type="NCBIfam" id="NF002735">
    <property type="entry name" value="PRK02655.1"/>
    <property type="match status" value="1"/>
</dbReference>
<dbReference type="PANTHER" id="PTHR35772">
    <property type="entry name" value="PHOTOSYSTEM II REACTION CENTER PROTEIN I"/>
    <property type="match status" value="1"/>
</dbReference>
<dbReference type="PANTHER" id="PTHR35772:SF1">
    <property type="entry name" value="PHOTOSYSTEM II REACTION CENTER PROTEIN I"/>
    <property type="match status" value="1"/>
</dbReference>
<dbReference type="Pfam" id="PF02532">
    <property type="entry name" value="PsbI"/>
    <property type="match status" value="1"/>
</dbReference>
<dbReference type="SUPFAM" id="SSF161041">
    <property type="entry name" value="Photosystem II reaction center protein I, PsbI"/>
    <property type="match status" value="1"/>
</dbReference>
<proteinExistence type="inferred from homology"/>
<keyword id="KW-0150">Chloroplast</keyword>
<keyword id="KW-0472">Membrane</keyword>
<keyword id="KW-0602">Photosynthesis</keyword>
<keyword id="KW-0604">Photosystem II</keyword>
<keyword id="KW-0934">Plastid</keyword>
<keyword id="KW-0674">Reaction center</keyword>
<keyword id="KW-0793">Thylakoid</keyword>
<keyword id="KW-0812">Transmembrane</keyword>
<keyword id="KW-1133">Transmembrane helix</keyword>
<reference key="1">
    <citation type="journal article" date="2007" name="Mol. Biol. Evol.">
        <title>Chloroplast genome (cpDNA) of Cycas taitungensis and 56 cp protein-coding genes of Gnetum parvifolium: insights into cpDNA evolution and phylogeny of extant seed plants.</title>
        <authorList>
            <person name="Wu C.-S."/>
            <person name="Wang Y.-N."/>
            <person name="Liu S.-M."/>
            <person name="Chaw S.-M."/>
        </authorList>
    </citation>
    <scope>NUCLEOTIDE SEQUENCE [LARGE SCALE GENOMIC DNA]</scope>
</reference>
<reference key="2">
    <citation type="journal article" date="2009" name="Mol. Phylogenet. Evol.">
        <title>Evolution of reduced and compact chloroplast genomes (cpDNAs) in gnetophytes: Selection toward a lower-cost strategy.</title>
        <authorList>
            <person name="Wu C.-S."/>
            <person name="Lai Y.-T."/>
            <person name="Lin C.-P."/>
            <person name="Wang Y.-N."/>
            <person name="Chaw S.-M."/>
        </authorList>
    </citation>
    <scope>NUCLEOTIDE SEQUENCE [LARGE SCALE GENOMIC DNA]</scope>
</reference>
<organism>
    <name type="scientific">Gnetum parvifolium</name>
    <name type="common">Small-leaved jointfir</name>
    <name type="synonym">Gnetum scandens var. parvifolium</name>
    <dbReference type="NCBI Taxonomy" id="33153"/>
    <lineage>
        <taxon>Eukaryota</taxon>
        <taxon>Viridiplantae</taxon>
        <taxon>Streptophyta</taxon>
        <taxon>Embryophyta</taxon>
        <taxon>Tracheophyta</taxon>
        <taxon>Spermatophyta</taxon>
        <taxon>Gnetopsida</taxon>
        <taxon>Gnetidae</taxon>
        <taxon>Gnetales</taxon>
        <taxon>Gnetaceae</taxon>
        <taxon>Gnetum</taxon>
    </lineage>
</organism>
<protein>
    <recommendedName>
        <fullName evidence="1">Photosystem II reaction center protein I</fullName>
        <shortName evidence="1">PSII-I</shortName>
    </recommendedName>
    <alternativeName>
        <fullName evidence="1">PSII 4.8 kDa protein</fullName>
    </alternativeName>
</protein>